<evidence type="ECO:0000250" key="1"/>
<evidence type="ECO:0000256" key="2">
    <source>
        <dbReference type="SAM" id="MobiDB-lite"/>
    </source>
</evidence>
<evidence type="ECO:0000305" key="3"/>
<sequence length="139" mass="16035">MDPLDVEDEVDESDTTSLQAQLRQNAIRKQEQFQQEIQERNSMVNRMSAEALQYFNQLHKAECSKKEELQTYIDENLKVFEKKQKRAQAPTKNNERSSSTHAALEEHKAASVTKKKLGIVKKGAPRKTKIRLPVRKSPN</sequence>
<accession>Q75EV9</accession>
<feature type="chain" id="PRO_0000292476" description="Protein FYV6">
    <location>
        <begin position="1"/>
        <end position="139"/>
    </location>
</feature>
<feature type="region of interest" description="Disordered" evidence="2">
    <location>
        <begin position="83"/>
        <end position="139"/>
    </location>
</feature>
<feature type="compositionally biased region" description="Polar residues" evidence="2">
    <location>
        <begin position="90"/>
        <end position="101"/>
    </location>
</feature>
<feature type="compositionally biased region" description="Basic residues" evidence="2">
    <location>
        <begin position="113"/>
        <end position="139"/>
    </location>
</feature>
<proteinExistence type="inferred from homology"/>
<keyword id="KW-0158">Chromosome</keyword>
<keyword id="KW-0539">Nucleus</keyword>
<keyword id="KW-1185">Reference proteome</keyword>
<keyword id="KW-0779">Telomere</keyword>
<reference key="1">
    <citation type="journal article" date="2004" name="Science">
        <title>The Ashbya gossypii genome as a tool for mapping the ancient Saccharomyces cerevisiae genome.</title>
        <authorList>
            <person name="Dietrich F.S."/>
            <person name="Voegeli S."/>
            <person name="Brachat S."/>
            <person name="Lerch A."/>
            <person name="Gates K."/>
            <person name="Steiner S."/>
            <person name="Mohr C."/>
            <person name="Poehlmann R."/>
            <person name="Luedi P."/>
            <person name="Choi S."/>
            <person name="Wing R.A."/>
            <person name="Flavier A."/>
            <person name="Gaffney T.D."/>
            <person name="Philippsen P."/>
        </authorList>
    </citation>
    <scope>NUCLEOTIDE SEQUENCE [LARGE SCALE GENOMIC DNA]</scope>
    <source>
        <strain>ATCC 10895 / CBS 109.51 / FGSC 9923 / NRRL Y-1056</strain>
    </source>
</reference>
<reference key="2">
    <citation type="journal article" date="2013" name="G3 (Bethesda)">
        <title>Genomes of Ashbya fungi isolated from insects reveal four mating-type loci, numerous translocations, lack of transposons, and distinct gene duplications.</title>
        <authorList>
            <person name="Dietrich F.S."/>
            <person name="Voegeli S."/>
            <person name="Kuo S."/>
            <person name="Philippsen P."/>
        </authorList>
    </citation>
    <scope>GENOME REANNOTATION</scope>
    <source>
        <strain>ATCC 10895 / CBS 109.51 / FGSC 9923 / NRRL Y-1056</strain>
    </source>
</reference>
<gene>
    <name type="primary">FYV6</name>
    <name type="ordered locus">AAL031W</name>
</gene>
<name>FYV6_EREGS</name>
<protein>
    <recommendedName>
        <fullName>Protein FYV6</fullName>
    </recommendedName>
</protein>
<organism>
    <name type="scientific">Eremothecium gossypii (strain ATCC 10895 / CBS 109.51 / FGSC 9923 / NRRL Y-1056)</name>
    <name type="common">Yeast</name>
    <name type="synonym">Ashbya gossypii</name>
    <dbReference type="NCBI Taxonomy" id="284811"/>
    <lineage>
        <taxon>Eukaryota</taxon>
        <taxon>Fungi</taxon>
        <taxon>Dikarya</taxon>
        <taxon>Ascomycota</taxon>
        <taxon>Saccharomycotina</taxon>
        <taxon>Saccharomycetes</taxon>
        <taxon>Saccharomycetales</taxon>
        <taxon>Saccharomycetaceae</taxon>
        <taxon>Eremothecium</taxon>
    </lineage>
</organism>
<comment type="function">
    <text evidence="1">Involved in telomere length regulation and promotes fully efficient non-homologous end-joining (NHEJ) by a mechanism activated in postdiauxic/stationary phase.</text>
</comment>
<comment type="subcellular location">
    <subcellularLocation>
        <location evidence="1">Nucleus</location>
    </subcellularLocation>
    <subcellularLocation>
        <location evidence="1">Chromosome</location>
        <location evidence="1">Telomere</location>
    </subcellularLocation>
</comment>
<comment type="similarity">
    <text evidence="3">Belongs to the FYV6 family.</text>
</comment>
<dbReference type="EMBL" id="AE016814">
    <property type="protein sequence ID" value="AAS50335.1"/>
    <property type="molecule type" value="Genomic_DNA"/>
</dbReference>
<dbReference type="RefSeq" id="NP_982511.1">
    <property type="nucleotide sequence ID" value="NM_207864.1"/>
</dbReference>
<dbReference type="SMR" id="Q75EV9"/>
<dbReference type="FunCoup" id="Q75EV9">
    <property type="interactions" value="54"/>
</dbReference>
<dbReference type="EnsemblFungi" id="AAS50335">
    <property type="protein sequence ID" value="AAS50335"/>
    <property type="gene ID" value="AGOS_AAL031W"/>
</dbReference>
<dbReference type="GeneID" id="4618470"/>
<dbReference type="KEGG" id="ago:AGOS_AAL031W"/>
<dbReference type="HOGENOM" id="CLU_128329_0_0_1"/>
<dbReference type="InParanoid" id="Q75EV9"/>
<dbReference type="OMA" id="HKAECSK"/>
<dbReference type="OrthoDB" id="4036151at2759"/>
<dbReference type="Proteomes" id="UP000000591">
    <property type="component" value="Chromosome I"/>
</dbReference>
<dbReference type="GO" id="GO:0000781">
    <property type="term" value="C:chromosome, telomeric region"/>
    <property type="evidence" value="ECO:0007669"/>
    <property type="project" value="UniProtKB-SubCell"/>
</dbReference>
<dbReference type="GO" id="GO:0005634">
    <property type="term" value="C:nucleus"/>
    <property type="evidence" value="ECO:0007669"/>
    <property type="project" value="UniProtKB-SubCell"/>
</dbReference>
<dbReference type="InterPro" id="IPR019331">
    <property type="entry name" value="FAM192A/Fyv6_N"/>
</dbReference>
<dbReference type="Pfam" id="PF10187">
    <property type="entry name" value="FAM192A_Fyv6_N"/>
    <property type="match status" value="1"/>
</dbReference>